<protein>
    <recommendedName>
        <fullName evidence="1">2-C-methyl-D-erythritol 4-phosphate cytidylyltransferase</fullName>
        <ecNumber evidence="1">2.7.7.60</ecNumber>
    </recommendedName>
    <alternativeName>
        <fullName evidence="1">4-diphosphocytidyl-2C-methyl-D-erythritol synthase</fullName>
    </alternativeName>
    <alternativeName>
        <fullName evidence="1">MEP cytidylyltransferase</fullName>
        <shortName evidence="1">MCT</shortName>
    </alternativeName>
</protein>
<dbReference type="EC" id="2.7.7.60" evidence="1"/>
<dbReference type="EMBL" id="BA000045">
    <property type="protein sequence ID" value="BAC90732.1"/>
    <property type="molecule type" value="Genomic_DNA"/>
</dbReference>
<dbReference type="RefSeq" id="NP_925737.1">
    <property type="nucleotide sequence ID" value="NC_005125.1"/>
</dbReference>
<dbReference type="RefSeq" id="WP_011142785.1">
    <property type="nucleotide sequence ID" value="NC_005125.1"/>
</dbReference>
<dbReference type="SMR" id="Q7NGU6"/>
<dbReference type="FunCoup" id="Q7NGU6">
    <property type="interactions" value="219"/>
</dbReference>
<dbReference type="STRING" id="251221.gene:10760294"/>
<dbReference type="EnsemblBacteria" id="BAC90732">
    <property type="protein sequence ID" value="BAC90732"/>
    <property type="gene ID" value="BAC90732"/>
</dbReference>
<dbReference type="KEGG" id="gvi:glr2791"/>
<dbReference type="PATRIC" id="fig|251221.4.peg.2820"/>
<dbReference type="eggNOG" id="COG1211">
    <property type="taxonomic scope" value="Bacteria"/>
</dbReference>
<dbReference type="HOGENOM" id="CLU_061281_1_0_3"/>
<dbReference type="InParanoid" id="Q7NGU6"/>
<dbReference type="OrthoDB" id="9806837at2"/>
<dbReference type="PhylomeDB" id="Q7NGU6"/>
<dbReference type="UniPathway" id="UPA00056">
    <property type="reaction ID" value="UER00093"/>
</dbReference>
<dbReference type="Proteomes" id="UP000000557">
    <property type="component" value="Chromosome"/>
</dbReference>
<dbReference type="GO" id="GO:0050518">
    <property type="term" value="F:2-C-methyl-D-erythritol 4-phosphate cytidylyltransferase activity"/>
    <property type="evidence" value="ECO:0000318"/>
    <property type="project" value="GO_Central"/>
</dbReference>
<dbReference type="GO" id="GO:0019288">
    <property type="term" value="P:isopentenyl diphosphate biosynthetic process, methylerythritol 4-phosphate pathway"/>
    <property type="evidence" value="ECO:0007669"/>
    <property type="project" value="UniProtKB-UniRule"/>
</dbReference>
<dbReference type="CDD" id="cd02516">
    <property type="entry name" value="CDP-ME_synthetase"/>
    <property type="match status" value="1"/>
</dbReference>
<dbReference type="FunFam" id="3.90.550.10:FF:000003">
    <property type="entry name" value="2-C-methyl-D-erythritol 4-phosphate cytidylyltransferase"/>
    <property type="match status" value="1"/>
</dbReference>
<dbReference type="Gene3D" id="3.90.550.10">
    <property type="entry name" value="Spore Coat Polysaccharide Biosynthesis Protein SpsA, Chain A"/>
    <property type="match status" value="1"/>
</dbReference>
<dbReference type="HAMAP" id="MF_00108">
    <property type="entry name" value="IspD"/>
    <property type="match status" value="1"/>
</dbReference>
<dbReference type="InterPro" id="IPR001228">
    <property type="entry name" value="IspD"/>
</dbReference>
<dbReference type="InterPro" id="IPR034683">
    <property type="entry name" value="IspD/TarI"/>
</dbReference>
<dbReference type="InterPro" id="IPR050088">
    <property type="entry name" value="IspD/TarI_cytidylyltransf_bact"/>
</dbReference>
<dbReference type="InterPro" id="IPR018294">
    <property type="entry name" value="ISPD_synthase_CS"/>
</dbReference>
<dbReference type="InterPro" id="IPR029044">
    <property type="entry name" value="Nucleotide-diphossugar_trans"/>
</dbReference>
<dbReference type="NCBIfam" id="TIGR00453">
    <property type="entry name" value="ispD"/>
    <property type="match status" value="1"/>
</dbReference>
<dbReference type="PANTHER" id="PTHR32125">
    <property type="entry name" value="2-C-METHYL-D-ERYTHRITOL 4-PHOSPHATE CYTIDYLYLTRANSFERASE, CHLOROPLASTIC"/>
    <property type="match status" value="1"/>
</dbReference>
<dbReference type="PANTHER" id="PTHR32125:SF4">
    <property type="entry name" value="2-C-METHYL-D-ERYTHRITOL 4-PHOSPHATE CYTIDYLYLTRANSFERASE, CHLOROPLASTIC"/>
    <property type="match status" value="1"/>
</dbReference>
<dbReference type="Pfam" id="PF01128">
    <property type="entry name" value="IspD"/>
    <property type="match status" value="1"/>
</dbReference>
<dbReference type="SUPFAM" id="SSF53448">
    <property type="entry name" value="Nucleotide-diphospho-sugar transferases"/>
    <property type="match status" value="1"/>
</dbReference>
<dbReference type="PROSITE" id="PS01295">
    <property type="entry name" value="ISPD"/>
    <property type="match status" value="1"/>
</dbReference>
<evidence type="ECO:0000255" key="1">
    <source>
        <dbReference type="HAMAP-Rule" id="MF_00108"/>
    </source>
</evidence>
<accession>Q7NGU6</accession>
<name>ISPD_GLOVI</name>
<organism>
    <name type="scientific">Gloeobacter violaceus (strain ATCC 29082 / PCC 7421)</name>
    <dbReference type="NCBI Taxonomy" id="251221"/>
    <lineage>
        <taxon>Bacteria</taxon>
        <taxon>Bacillati</taxon>
        <taxon>Cyanobacteriota</taxon>
        <taxon>Cyanophyceae</taxon>
        <taxon>Gloeobacterales</taxon>
        <taxon>Gloeobacteraceae</taxon>
        <taxon>Gloeobacter</taxon>
    </lineage>
</organism>
<feature type="chain" id="PRO_0000075577" description="2-C-methyl-D-erythritol 4-phosphate cytidylyltransferase">
    <location>
        <begin position="1"/>
        <end position="233"/>
    </location>
</feature>
<feature type="site" description="Transition state stabilizer" evidence="1">
    <location>
        <position position="13"/>
    </location>
</feature>
<feature type="site" description="Transition state stabilizer" evidence="1">
    <location>
        <position position="20"/>
    </location>
</feature>
<feature type="site" description="Positions MEP for the nucleophilic attack" evidence="1">
    <location>
        <position position="153"/>
    </location>
</feature>
<feature type="site" description="Positions MEP for the nucleophilic attack" evidence="1">
    <location>
        <position position="209"/>
    </location>
</feature>
<keyword id="KW-0414">Isoprene biosynthesis</keyword>
<keyword id="KW-0548">Nucleotidyltransferase</keyword>
<keyword id="KW-1185">Reference proteome</keyword>
<keyword id="KW-0808">Transferase</keyword>
<proteinExistence type="inferred from homology"/>
<sequence>MHLLIPAAGRGSRMGADGNKLLLPLSGRPLLAWTLAAAAQAPSTRWIGIIGQPMDEEAIRLLAQKLGLRVPVHWIEGGETRQQSVYRGLLALPVEAQQVLIHDGARCLASPALFERCAAALAEFSAIVAAVPVKDTIKQVYPQSRQVEKTIPREQLWAAQTPQGGNVGRLKAAHAWAAAQAVAVTDDAALCELRGEPVQVVPGEETNLKITTPADLLVAEAILKTQLRQDPSP</sequence>
<gene>
    <name evidence="1" type="primary">ispD</name>
    <name type="ordered locus">glr2791</name>
</gene>
<comment type="function">
    <text evidence="1">Catalyzes the formation of 4-diphosphocytidyl-2-C-methyl-D-erythritol from CTP and 2-C-methyl-D-erythritol 4-phosphate (MEP).</text>
</comment>
<comment type="catalytic activity">
    <reaction evidence="1">
        <text>2-C-methyl-D-erythritol 4-phosphate + CTP + H(+) = 4-CDP-2-C-methyl-D-erythritol + diphosphate</text>
        <dbReference type="Rhea" id="RHEA:13429"/>
        <dbReference type="ChEBI" id="CHEBI:15378"/>
        <dbReference type="ChEBI" id="CHEBI:33019"/>
        <dbReference type="ChEBI" id="CHEBI:37563"/>
        <dbReference type="ChEBI" id="CHEBI:57823"/>
        <dbReference type="ChEBI" id="CHEBI:58262"/>
        <dbReference type="EC" id="2.7.7.60"/>
    </reaction>
</comment>
<comment type="pathway">
    <text evidence="1">Isoprenoid biosynthesis; isopentenyl diphosphate biosynthesis via DXP pathway; isopentenyl diphosphate from 1-deoxy-D-xylulose 5-phosphate: step 2/6.</text>
</comment>
<comment type="similarity">
    <text evidence="1">Belongs to the IspD/TarI cytidylyltransferase family. IspD subfamily.</text>
</comment>
<reference key="1">
    <citation type="journal article" date="2003" name="DNA Res.">
        <title>Complete genome structure of Gloeobacter violaceus PCC 7421, a cyanobacterium that lacks thylakoids.</title>
        <authorList>
            <person name="Nakamura Y."/>
            <person name="Kaneko T."/>
            <person name="Sato S."/>
            <person name="Mimuro M."/>
            <person name="Miyashita H."/>
            <person name="Tsuchiya T."/>
            <person name="Sasamoto S."/>
            <person name="Watanabe A."/>
            <person name="Kawashima K."/>
            <person name="Kishida Y."/>
            <person name="Kiyokawa C."/>
            <person name="Kohara M."/>
            <person name="Matsumoto M."/>
            <person name="Matsuno A."/>
            <person name="Nakazaki N."/>
            <person name="Shimpo S."/>
            <person name="Takeuchi C."/>
            <person name="Yamada M."/>
            <person name="Tabata S."/>
        </authorList>
    </citation>
    <scope>NUCLEOTIDE SEQUENCE [LARGE SCALE GENOMIC DNA]</scope>
    <source>
        <strain>ATCC 29082 / PCC 7421</strain>
    </source>
</reference>